<gene>
    <name type="primary">pyrFE</name>
    <name type="ordered locus">alr2945</name>
</gene>
<feature type="chain" id="PRO_0000134638" description="Bifunctional enzyme PyrF/PyrE">
    <location>
        <begin position="1"/>
        <end position="477"/>
    </location>
</feature>
<feature type="region of interest" description="OMP decarboxylase">
    <location>
        <begin position="1"/>
        <end position="273"/>
    </location>
</feature>
<feature type="region of interest" description="Orotate phosphoribosyltransferase">
    <location>
        <begin position="274"/>
        <end position="477"/>
    </location>
</feature>
<feature type="active site" description="Proton donor" evidence="1">
    <location>
        <position position="96"/>
    </location>
</feature>
<feature type="binding site" evidence="1">
    <location>
        <position position="374"/>
    </location>
    <ligand>
        <name>5-phospho-alpha-D-ribose 1-diphosphate</name>
        <dbReference type="ChEBI" id="CHEBI:58017"/>
        <note>ligand shared between dimeric partners</note>
    </ligand>
</feature>
<feature type="binding site" description="in other chain" evidence="1">
    <location>
        <position position="375"/>
    </location>
    <ligand>
        <name>5-phospho-alpha-D-ribose 1-diphosphate</name>
        <dbReference type="ChEBI" id="CHEBI:58017"/>
        <note>ligand shared between dimeric partners</note>
    </ligand>
</feature>
<feature type="binding site" evidence="1">
    <location>
        <position position="378"/>
    </location>
    <ligand>
        <name>5-phospho-alpha-D-ribose 1-diphosphate</name>
        <dbReference type="ChEBI" id="CHEBI:58017"/>
        <note>ligand shared between dimeric partners</note>
    </ligand>
</feature>
<feature type="binding site" evidence="1">
    <location>
        <position position="380"/>
    </location>
    <ligand>
        <name>5-phospho-alpha-D-ribose 1-diphosphate</name>
        <dbReference type="ChEBI" id="CHEBI:58017"/>
        <note>ligand shared between dimeric partners</note>
    </ligand>
</feature>
<feature type="binding site" description="in other chain" evidence="1">
    <location>
        <begin position="400"/>
        <end position="408"/>
    </location>
    <ligand>
        <name>5-phospho-alpha-D-ribose 1-diphosphate</name>
        <dbReference type="ChEBI" id="CHEBI:58017"/>
        <note>ligand shared between dimeric partners</note>
    </ligand>
</feature>
<proteinExistence type="inferred from homology"/>
<organism>
    <name type="scientific">Nostoc sp. (strain PCC 7120 / SAG 25.82 / UTEX 2576)</name>
    <dbReference type="NCBI Taxonomy" id="103690"/>
    <lineage>
        <taxon>Bacteria</taxon>
        <taxon>Bacillati</taxon>
        <taxon>Cyanobacteriota</taxon>
        <taxon>Cyanophyceae</taxon>
        <taxon>Nostocales</taxon>
        <taxon>Nostocaceae</taxon>
        <taxon>Nostoc</taxon>
    </lineage>
</organism>
<name>PYRFE_NOSS1</name>
<reference key="1">
    <citation type="journal article" date="2001" name="DNA Res.">
        <title>Complete genomic sequence of the filamentous nitrogen-fixing cyanobacterium Anabaena sp. strain PCC 7120.</title>
        <authorList>
            <person name="Kaneko T."/>
            <person name="Nakamura Y."/>
            <person name="Wolk C.P."/>
            <person name="Kuritz T."/>
            <person name="Sasamoto S."/>
            <person name="Watanabe A."/>
            <person name="Iriguchi M."/>
            <person name="Ishikawa A."/>
            <person name="Kawashima K."/>
            <person name="Kimura T."/>
            <person name="Kishida Y."/>
            <person name="Kohara M."/>
            <person name="Matsumoto M."/>
            <person name="Matsuno A."/>
            <person name="Muraki A."/>
            <person name="Nakazaki N."/>
            <person name="Shimpo S."/>
            <person name="Sugimoto M."/>
            <person name="Takazawa M."/>
            <person name="Yamada M."/>
            <person name="Yasuda M."/>
            <person name="Tabata S."/>
        </authorList>
    </citation>
    <scope>NUCLEOTIDE SEQUENCE [LARGE SCALE GENOMIC DNA]</scope>
    <source>
        <strain>PCC 7120 / SAG 25.82 / UTEX 2576</strain>
    </source>
</reference>
<keyword id="KW-0210">Decarboxylase</keyword>
<keyword id="KW-0328">Glycosyltransferase</keyword>
<keyword id="KW-0456">Lyase</keyword>
<keyword id="KW-0460">Magnesium</keyword>
<keyword id="KW-0511">Multifunctional enzyme</keyword>
<keyword id="KW-0665">Pyrimidine biosynthesis</keyword>
<keyword id="KW-1185">Reference proteome</keyword>
<keyword id="KW-0808">Transferase</keyword>
<accession>Q8YSY4</accession>
<protein>
    <recommendedName>
        <fullName>Bifunctional enzyme PyrF/PyrE</fullName>
    </recommendedName>
    <domain>
        <recommendedName>
            <fullName>Orotidine 5'-phosphate decarboxylase</fullName>
            <ecNumber>4.1.1.23</ecNumber>
        </recommendedName>
        <alternativeName>
            <fullName>OMP decarboxylase</fullName>
            <shortName>OMPDCase</shortName>
            <shortName>OMPdecase</shortName>
        </alternativeName>
    </domain>
    <domain>
        <recommendedName>
            <fullName>Orotate phosphoribosyltransferase</fullName>
            <shortName>OPRT</shortName>
            <shortName>OPRTase</shortName>
            <ecNumber>2.4.2.10</ecNumber>
        </recommendedName>
    </domain>
</protein>
<sequence length="477" mass="52826">MIFFDKLHQNISQNQSLLFVGLDPNPEMMPGRYSSQDIIDGLWDWLQFIIAETADFVCAYKPTLGFYEALGVPGLELLQKTLAAIPSHIPIILDAKHSDLNTSTIFAKTVFTQWGVDAITLSPYTGQDHVAPFLVYPDKAVFILCSTSNPGAEALQQYPTRESPLYLQVVQESKNWGTPEQLGLEVGTTNAEVLARIRQVAPERMIMVRSIWAEGGNLNRILEVGLNTDGNGLLIPVPQDMLASANLSKEIQSLRAEINQVRDITVRDVASCSVWLPDVFTVKQHPLHDLILQLYDIDCIMFGNFVQASGAVFPYYIDLRKIISNPQVFNQVLSGYENIVKNLTFDRLAGIPYGSLPTATGLALRLNCPMIFPRKEVKAHGTRRLIEGNFRTGEVVVVVDDILISGKSVMEGADKLKSAGLNVHDIVVFIDHEQGVKDKLQANGYRGHAVLTISEITSVLHQAGRINDEQFLALTAE</sequence>
<dbReference type="EC" id="4.1.1.23"/>
<dbReference type="EC" id="2.4.2.10"/>
<dbReference type="EMBL" id="BA000019">
    <property type="protein sequence ID" value="BAB74644.1"/>
    <property type="status" value="ALT_INIT"/>
    <property type="molecule type" value="Genomic_DNA"/>
</dbReference>
<dbReference type="PIR" id="AB2174">
    <property type="entry name" value="AB2174"/>
</dbReference>
<dbReference type="RefSeq" id="WP_044523080.1">
    <property type="nucleotide sequence ID" value="NZ_RSCN01000003.1"/>
</dbReference>
<dbReference type="SMR" id="Q8YSY4"/>
<dbReference type="STRING" id="103690.gene:10494981"/>
<dbReference type="KEGG" id="ana:alr2945"/>
<dbReference type="eggNOG" id="COG0284">
    <property type="taxonomic scope" value="Bacteria"/>
</dbReference>
<dbReference type="eggNOG" id="COG0461">
    <property type="taxonomic scope" value="Bacteria"/>
</dbReference>
<dbReference type="OrthoDB" id="9802134at2"/>
<dbReference type="UniPathway" id="UPA00070">
    <property type="reaction ID" value="UER00119"/>
</dbReference>
<dbReference type="UniPathway" id="UPA00070">
    <property type="reaction ID" value="UER00120"/>
</dbReference>
<dbReference type="Proteomes" id="UP000002483">
    <property type="component" value="Chromosome"/>
</dbReference>
<dbReference type="GO" id="GO:0000287">
    <property type="term" value="F:magnesium ion binding"/>
    <property type="evidence" value="ECO:0007669"/>
    <property type="project" value="UniProtKB-UniRule"/>
</dbReference>
<dbReference type="GO" id="GO:0004588">
    <property type="term" value="F:orotate phosphoribosyltransferase activity"/>
    <property type="evidence" value="ECO:0007669"/>
    <property type="project" value="UniProtKB-UniRule"/>
</dbReference>
<dbReference type="GO" id="GO:0004590">
    <property type="term" value="F:orotidine-5'-phosphate decarboxylase activity"/>
    <property type="evidence" value="ECO:0007669"/>
    <property type="project" value="UniProtKB-EC"/>
</dbReference>
<dbReference type="GO" id="GO:0006207">
    <property type="term" value="P:'de novo' pyrimidine nucleobase biosynthetic process"/>
    <property type="evidence" value="ECO:0007669"/>
    <property type="project" value="InterPro"/>
</dbReference>
<dbReference type="GO" id="GO:0044205">
    <property type="term" value="P:'de novo' UMP biosynthetic process"/>
    <property type="evidence" value="ECO:0007669"/>
    <property type="project" value="UniProtKB-UniRule"/>
</dbReference>
<dbReference type="CDD" id="cd04725">
    <property type="entry name" value="OMP_decarboxylase_like"/>
    <property type="match status" value="1"/>
</dbReference>
<dbReference type="CDD" id="cd06223">
    <property type="entry name" value="PRTases_typeI"/>
    <property type="match status" value="1"/>
</dbReference>
<dbReference type="Gene3D" id="3.40.50.2020">
    <property type="match status" value="1"/>
</dbReference>
<dbReference type="Gene3D" id="3.20.20.70">
    <property type="entry name" value="Aldolase class I"/>
    <property type="match status" value="1"/>
</dbReference>
<dbReference type="HAMAP" id="MF_01208">
    <property type="entry name" value="PyrE"/>
    <property type="match status" value="1"/>
</dbReference>
<dbReference type="InterPro" id="IPR013785">
    <property type="entry name" value="Aldolase_TIM"/>
</dbReference>
<dbReference type="InterPro" id="IPR011995">
    <property type="entry name" value="OMPdecase_type-2"/>
</dbReference>
<dbReference type="InterPro" id="IPR001754">
    <property type="entry name" value="OMPdeCOase_dom"/>
</dbReference>
<dbReference type="InterPro" id="IPR023031">
    <property type="entry name" value="OPRT"/>
</dbReference>
<dbReference type="InterPro" id="IPR004467">
    <property type="entry name" value="Or_phspho_trans_dom"/>
</dbReference>
<dbReference type="InterPro" id="IPR000836">
    <property type="entry name" value="PRibTrfase_dom"/>
</dbReference>
<dbReference type="InterPro" id="IPR029057">
    <property type="entry name" value="PRTase-like"/>
</dbReference>
<dbReference type="InterPro" id="IPR011060">
    <property type="entry name" value="RibuloseP-bd_barrel"/>
</dbReference>
<dbReference type="NCBIfam" id="NF004034">
    <property type="entry name" value="PRK05500.1"/>
    <property type="match status" value="1"/>
</dbReference>
<dbReference type="NCBIfam" id="TIGR00336">
    <property type="entry name" value="pyrE"/>
    <property type="match status" value="1"/>
</dbReference>
<dbReference type="NCBIfam" id="TIGR02127">
    <property type="entry name" value="pyrF_sub2"/>
    <property type="match status" value="1"/>
</dbReference>
<dbReference type="PANTHER" id="PTHR19278">
    <property type="entry name" value="OROTATE PHOSPHORIBOSYLTRANSFERASE"/>
    <property type="match status" value="1"/>
</dbReference>
<dbReference type="PANTHER" id="PTHR19278:SF9">
    <property type="entry name" value="URIDINE 5'-MONOPHOSPHATE SYNTHASE"/>
    <property type="match status" value="1"/>
</dbReference>
<dbReference type="Pfam" id="PF00215">
    <property type="entry name" value="OMPdecase"/>
    <property type="match status" value="1"/>
</dbReference>
<dbReference type="Pfam" id="PF00156">
    <property type="entry name" value="Pribosyltran"/>
    <property type="match status" value="1"/>
</dbReference>
<dbReference type="SMART" id="SM00934">
    <property type="entry name" value="OMPdecase"/>
    <property type="match status" value="1"/>
</dbReference>
<dbReference type="SUPFAM" id="SSF53271">
    <property type="entry name" value="PRTase-like"/>
    <property type="match status" value="1"/>
</dbReference>
<dbReference type="SUPFAM" id="SSF51366">
    <property type="entry name" value="Ribulose-phoshate binding barrel"/>
    <property type="match status" value="1"/>
</dbReference>
<comment type="function">
    <text evidence="1">Catalyzes the transfer of a ribosyl phosphate group from 5-phosphoribose 1-diphosphate to orotate, leading to the formation of orotidine monophosphate (OMP).</text>
</comment>
<comment type="function">
    <text evidence="1">Catalyzes the decarboxylation of orotidine monophosphate (OMP) to uridine monophosphate (UMP).</text>
</comment>
<comment type="catalytic activity">
    <reaction>
        <text>orotidine 5'-phosphate + H(+) = UMP + CO2</text>
        <dbReference type="Rhea" id="RHEA:11596"/>
        <dbReference type="ChEBI" id="CHEBI:15378"/>
        <dbReference type="ChEBI" id="CHEBI:16526"/>
        <dbReference type="ChEBI" id="CHEBI:57538"/>
        <dbReference type="ChEBI" id="CHEBI:57865"/>
        <dbReference type="EC" id="4.1.1.23"/>
    </reaction>
</comment>
<comment type="catalytic activity">
    <reaction>
        <text>orotidine 5'-phosphate + diphosphate = orotate + 5-phospho-alpha-D-ribose 1-diphosphate</text>
        <dbReference type="Rhea" id="RHEA:10380"/>
        <dbReference type="ChEBI" id="CHEBI:30839"/>
        <dbReference type="ChEBI" id="CHEBI:33019"/>
        <dbReference type="ChEBI" id="CHEBI:57538"/>
        <dbReference type="ChEBI" id="CHEBI:58017"/>
        <dbReference type="EC" id="2.4.2.10"/>
    </reaction>
</comment>
<comment type="cofactor">
    <cofactor evidence="1">
        <name>Mg(2+)</name>
        <dbReference type="ChEBI" id="CHEBI:18420"/>
    </cofactor>
</comment>
<comment type="pathway">
    <text>Pyrimidine metabolism; UMP biosynthesis via de novo pathway; UMP from orotate: step 1/2.</text>
</comment>
<comment type="pathway">
    <text>Pyrimidine metabolism; UMP biosynthesis via de novo pathway; UMP from orotate: step 2/2.</text>
</comment>
<comment type="similarity">
    <text evidence="2">In the N-terminal section; belongs to the OMP decarboxylase family. Type 2 subfamily.</text>
</comment>
<comment type="similarity">
    <text evidence="2">In the C-terminal section; belongs to the purine/pyrimidine phosphoribosyltransferase family.</text>
</comment>
<comment type="sequence caution" evidence="2">
    <conflict type="erroneous initiation">
        <sequence resource="EMBL-CDS" id="BAB74644"/>
    </conflict>
</comment>
<evidence type="ECO:0000250" key="1"/>
<evidence type="ECO:0000305" key="2"/>